<evidence type="ECO:0000250" key="1">
    <source>
        <dbReference type="UniProtKB" id="Q9NPJ1"/>
    </source>
</evidence>
<evidence type="ECO:0000255" key="2"/>
<evidence type="ECO:0000305" key="3"/>
<comment type="function">
    <text evidence="1">Probable molecular chaperone that assists the folding of proteins upon ATP hydrolysis. Plays a role in the assembly of BBSome, a complex involved in ciliogenesis regulating transports vesicles to the cilia. May play a role in protein processing in limb, cardiac and reproductive system development. May play a role in cytokinesis.</text>
</comment>
<comment type="subunit">
    <text evidence="1">Component of a complex composed at least of MKKS, BBS10, BBS12, TCP1, CCT2, CCT3, CCT4, CCT5 and CCT8. Interacts with STUB1. Interacts with BBS2 (via coiled coil domain). Interacts with CCDC28B. Interacts with BBS12. Interacts with SMARCC1, a component of the SWI/SNF complexes; the interaction takes place predominantly in the cytoplasm and may modulate SMARCC1 location (By similarity). Interacts with DLEC1 (By similarity).</text>
</comment>
<comment type="subcellular location">
    <subcellularLocation>
        <location evidence="1">Cytoplasm</location>
        <location evidence="1">Cytoskeleton</location>
        <location evidence="1">Microtubule organizing center</location>
        <location evidence="1">Centrosome</location>
    </subcellularLocation>
    <subcellularLocation>
        <location evidence="1">Cytoplasm</location>
        <location evidence="1">Cytosol</location>
    </subcellularLocation>
    <subcellularLocation>
        <location evidence="1">Nucleus</location>
    </subcellularLocation>
    <text evidence="1">The majority of the protein resides within the pericentriolar material (PCM), a proteinaceous tube surrounding centrioles. During interphase, the protein is confined to the lateral surfaces of the PCM but during mitosis it relocalizes throughout the PCM and is found at the intercellular bridge. The MKSS protein is highly mobile and rapidly shuttles between the cytosol and centrosome.</text>
</comment>
<comment type="similarity">
    <text evidence="3">Belongs to the TCP-1 chaperonin family.</text>
</comment>
<feature type="chain" id="PRO_0000128417" description="Molecular chaperone MKKS">
    <location>
        <begin position="1"/>
        <end position="570"/>
    </location>
</feature>
<feature type="region of interest" description="Substrate-binding apical domain" evidence="1">
    <location>
        <begin position="198"/>
        <end position="370"/>
    </location>
</feature>
<feature type="binding site" evidence="2">
    <location>
        <begin position="192"/>
        <end position="199"/>
    </location>
    <ligand>
        <name>ATP</name>
        <dbReference type="ChEBI" id="CHEBI:30616"/>
    </ligand>
</feature>
<feature type="sequence conflict" description="In Ref. 1; CAH93229." evidence="3" ref="1">
    <original>C</original>
    <variation>R</variation>
    <location>
        <position position="100"/>
    </location>
</feature>
<feature type="sequence conflict" description="In Ref. 1; CAH90277." evidence="3" ref="1">
    <original>N</original>
    <variation>D</variation>
    <location>
        <position position="570"/>
    </location>
</feature>
<proteinExistence type="evidence at transcript level"/>
<reference key="1">
    <citation type="submission" date="2004-11" db="EMBL/GenBank/DDBJ databases">
        <authorList>
            <consortium name="The German cDNA consortium"/>
        </authorList>
    </citation>
    <scope>NUCLEOTIDE SEQUENCE [LARGE SCALE MRNA]</scope>
    <source>
        <tissue>Brain cortex</tissue>
    </source>
</reference>
<name>MKKS_PONAB</name>
<protein>
    <recommendedName>
        <fullName evidence="3">Molecular chaperone MKKS</fullName>
    </recommendedName>
    <alternativeName>
        <fullName>McKusick-Kaufman/Bardet-Biedl syndromes putative chaperonin</fullName>
    </alternativeName>
    <alternativeName>
        <fullName>Protein Bbs6 homolog</fullName>
    </alternativeName>
</protein>
<dbReference type="EMBL" id="CR858036">
    <property type="protein sequence ID" value="CAH90277.1"/>
    <property type="molecule type" value="mRNA"/>
</dbReference>
<dbReference type="EMBL" id="CR861155">
    <property type="protein sequence ID" value="CAH93229.1"/>
    <property type="molecule type" value="mRNA"/>
</dbReference>
<dbReference type="RefSeq" id="NP_001125124.1">
    <property type="nucleotide sequence ID" value="NM_001131652.1"/>
</dbReference>
<dbReference type="RefSeq" id="XP_009231560.1">
    <property type="nucleotide sequence ID" value="XM_009233285.1"/>
</dbReference>
<dbReference type="SMR" id="Q5R4T7"/>
<dbReference type="FunCoup" id="Q5R4T7">
    <property type="interactions" value="590"/>
</dbReference>
<dbReference type="STRING" id="9601.ENSPPYP00000011971"/>
<dbReference type="GeneID" id="100172008"/>
<dbReference type="KEGG" id="pon:100172008"/>
<dbReference type="CTD" id="8195"/>
<dbReference type="eggNOG" id="KOG0360">
    <property type="taxonomic scope" value="Eukaryota"/>
</dbReference>
<dbReference type="HOGENOM" id="CLU_478131_0_0_1"/>
<dbReference type="InParanoid" id="Q5R4T7"/>
<dbReference type="OrthoDB" id="528704at2759"/>
<dbReference type="TreeFam" id="TF329106"/>
<dbReference type="Proteomes" id="UP000001595">
    <property type="component" value="Chromosome 20"/>
</dbReference>
<dbReference type="GO" id="GO:0005813">
    <property type="term" value="C:centrosome"/>
    <property type="evidence" value="ECO:0007669"/>
    <property type="project" value="UniProtKB-SubCell"/>
</dbReference>
<dbReference type="GO" id="GO:0005737">
    <property type="term" value="C:cytoplasm"/>
    <property type="evidence" value="ECO:0000250"/>
    <property type="project" value="UniProtKB"/>
</dbReference>
<dbReference type="GO" id="GO:0005829">
    <property type="term" value="C:cytosol"/>
    <property type="evidence" value="ECO:0007669"/>
    <property type="project" value="UniProtKB-SubCell"/>
</dbReference>
<dbReference type="GO" id="GO:1902636">
    <property type="term" value="C:kinociliary basal body"/>
    <property type="evidence" value="ECO:0007669"/>
    <property type="project" value="TreeGrafter"/>
</dbReference>
<dbReference type="GO" id="GO:0005634">
    <property type="term" value="C:nucleus"/>
    <property type="evidence" value="ECO:0000250"/>
    <property type="project" value="UniProtKB"/>
</dbReference>
<dbReference type="GO" id="GO:0005524">
    <property type="term" value="F:ATP binding"/>
    <property type="evidence" value="ECO:0007669"/>
    <property type="project" value="UniProtKB-KW"/>
</dbReference>
<dbReference type="GO" id="GO:0051082">
    <property type="term" value="F:unfolded protein binding"/>
    <property type="evidence" value="ECO:0007669"/>
    <property type="project" value="InterPro"/>
</dbReference>
<dbReference type="GO" id="GO:0051131">
    <property type="term" value="P:chaperone-mediated protein complex assembly"/>
    <property type="evidence" value="ECO:0007669"/>
    <property type="project" value="TreeGrafter"/>
</dbReference>
<dbReference type="GO" id="GO:0060271">
    <property type="term" value="P:cilium assembly"/>
    <property type="evidence" value="ECO:0000250"/>
    <property type="project" value="UniProtKB"/>
</dbReference>
<dbReference type="GO" id="GO:0032502">
    <property type="term" value="P:developmental process"/>
    <property type="evidence" value="ECO:0007669"/>
    <property type="project" value="TreeGrafter"/>
</dbReference>
<dbReference type="GO" id="GO:0046907">
    <property type="term" value="P:intracellular transport"/>
    <property type="evidence" value="ECO:0007669"/>
    <property type="project" value="TreeGrafter"/>
</dbReference>
<dbReference type="GO" id="GO:0006457">
    <property type="term" value="P:protein folding"/>
    <property type="evidence" value="ECO:0007669"/>
    <property type="project" value="InterPro"/>
</dbReference>
<dbReference type="FunFam" id="3.30.260.10:FF:000016">
    <property type="entry name" value="McKusick-Kaufman syndrome"/>
    <property type="match status" value="1"/>
</dbReference>
<dbReference type="FunFam" id="3.50.7.10:FF:000011">
    <property type="entry name" value="McKusick-Kaufman/Bardet-Biedl syndromes putative chaperonin"/>
    <property type="match status" value="1"/>
</dbReference>
<dbReference type="Gene3D" id="3.50.7.10">
    <property type="entry name" value="GroEL"/>
    <property type="match status" value="1"/>
</dbReference>
<dbReference type="Gene3D" id="1.10.560.10">
    <property type="entry name" value="GroEL-like equatorial domain"/>
    <property type="match status" value="1"/>
</dbReference>
<dbReference type="Gene3D" id="3.30.260.10">
    <property type="entry name" value="TCP-1-like chaperonin intermediate domain"/>
    <property type="match status" value="1"/>
</dbReference>
<dbReference type="InterPro" id="IPR002423">
    <property type="entry name" value="Cpn60/GroEL/TCP-1"/>
</dbReference>
<dbReference type="InterPro" id="IPR027409">
    <property type="entry name" value="GroEL-like_apical_dom_sf"/>
</dbReference>
<dbReference type="InterPro" id="IPR027413">
    <property type="entry name" value="GROEL-like_equatorial_sf"/>
</dbReference>
<dbReference type="InterPro" id="IPR028790">
    <property type="entry name" value="MKKS"/>
</dbReference>
<dbReference type="InterPro" id="IPR027410">
    <property type="entry name" value="TCP-1-like_intermed_sf"/>
</dbReference>
<dbReference type="PANTHER" id="PTHR46787:SF1">
    <property type="entry name" value="MOLECULAR CHAPERONE MKKS"/>
    <property type="match status" value="1"/>
</dbReference>
<dbReference type="PANTHER" id="PTHR46787">
    <property type="entry name" value="SYNDROMES PUTATIVE CHAPERONIN-RELATED"/>
    <property type="match status" value="1"/>
</dbReference>
<dbReference type="Pfam" id="PF00118">
    <property type="entry name" value="Cpn60_TCP1"/>
    <property type="match status" value="1"/>
</dbReference>
<dbReference type="SUPFAM" id="SSF52029">
    <property type="entry name" value="GroEL apical domain-like"/>
    <property type="match status" value="1"/>
</dbReference>
<dbReference type="SUPFAM" id="SSF48592">
    <property type="entry name" value="GroEL equatorial domain-like"/>
    <property type="match status" value="1"/>
</dbReference>
<sequence>MSRLEAKKPSLCKSEPLTTERVRTTLSVFKRIVTSCYGPSGRLKQLHNGFGGYVCTTSQSSALLSHLLVTHPILKILTTSIQNHVSSFSDCGLFTAILCCNLIENVQRLDLTPTTVIRLNKHLLSLCISYLKSETCGCRIPVDFGSTQILLCFVRSVLTSKPACMLTRKETEHVSALILRAFLLTIPENAEGHIILGKSLIVPLKGQRVIDSTVLPGILIEMSEVQLMRLLPIKKSTALKVALFCTTLSGDISDTGEGTVVVSYGVSLENAALDQLLNLGRQLISDHVDLVLCQKVIHPSLKQFLNMHRIIAIDRIGVTLMEPLTKMTGTQPIGSLGSISPNSYGSVKDVCTAKFGSKHFFHLIPNEATICSLLLCNRNDTAWDELKLTCQTALHVLQLTLKEPWALLGGGCTETHLAAYIRHKTHNDPESILKDDECTQTELQLIAEAFCSALESVVGSLEHDGGEILTDMKYGHLWSVQADSPCVANWPDLLSQCGCGLYNSQEELNWSFLRSTRRPFVPQTCLPHEAVGSASNLTLDCLTAKLSGLQVAVETANLILDLSYVIEDKN</sequence>
<gene>
    <name type="primary">MKKS</name>
    <name type="synonym">BBS6</name>
</gene>
<accession>Q5R4T7</accession>
<accession>Q5RD80</accession>
<keyword id="KW-0067">ATP-binding</keyword>
<keyword id="KW-0143">Chaperone</keyword>
<keyword id="KW-0963">Cytoplasm</keyword>
<keyword id="KW-0206">Cytoskeleton</keyword>
<keyword id="KW-0547">Nucleotide-binding</keyword>
<keyword id="KW-0539">Nucleus</keyword>
<keyword id="KW-1185">Reference proteome</keyword>
<organism>
    <name type="scientific">Pongo abelii</name>
    <name type="common">Sumatran orangutan</name>
    <name type="synonym">Pongo pygmaeus abelii</name>
    <dbReference type="NCBI Taxonomy" id="9601"/>
    <lineage>
        <taxon>Eukaryota</taxon>
        <taxon>Metazoa</taxon>
        <taxon>Chordata</taxon>
        <taxon>Craniata</taxon>
        <taxon>Vertebrata</taxon>
        <taxon>Euteleostomi</taxon>
        <taxon>Mammalia</taxon>
        <taxon>Eutheria</taxon>
        <taxon>Euarchontoglires</taxon>
        <taxon>Primates</taxon>
        <taxon>Haplorrhini</taxon>
        <taxon>Catarrhini</taxon>
        <taxon>Hominidae</taxon>
        <taxon>Pongo</taxon>
    </lineage>
</organism>